<proteinExistence type="inferred from homology"/>
<name>RL3_STRCO</name>
<keyword id="KW-1185">Reference proteome</keyword>
<keyword id="KW-0687">Ribonucleoprotein</keyword>
<keyword id="KW-0689">Ribosomal protein</keyword>
<keyword id="KW-0694">RNA-binding</keyword>
<keyword id="KW-0699">rRNA-binding</keyword>
<comment type="function">
    <text evidence="1">One of the primary rRNA binding proteins, it binds directly near the 3'-end of the 23S rRNA, where it nucleates assembly of the 50S subunit.</text>
</comment>
<comment type="subunit">
    <text evidence="1">Part of the 50S ribosomal subunit. Forms a cluster with proteins L14 and L19.</text>
</comment>
<comment type="similarity">
    <text evidence="1">Belongs to the universal ribosomal protein uL3 family.</text>
</comment>
<reference key="1">
    <citation type="journal article" date="2002" name="Nature">
        <title>Complete genome sequence of the model actinomycete Streptomyces coelicolor A3(2).</title>
        <authorList>
            <person name="Bentley S.D."/>
            <person name="Chater K.F."/>
            <person name="Cerdeno-Tarraga A.-M."/>
            <person name="Challis G.L."/>
            <person name="Thomson N.R."/>
            <person name="James K.D."/>
            <person name="Harris D.E."/>
            <person name="Quail M.A."/>
            <person name="Kieser H."/>
            <person name="Harper D."/>
            <person name="Bateman A."/>
            <person name="Brown S."/>
            <person name="Chandra G."/>
            <person name="Chen C.W."/>
            <person name="Collins M."/>
            <person name="Cronin A."/>
            <person name="Fraser A."/>
            <person name="Goble A."/>
            <person name="Hidalgo J."/>
            <person name="Hornsby T."/>
            <person name="Howarth S."/>
            <person name="Huang C.-H."/>
            <person name="Kieser T."/>
            <person name="Larke L."/>
            <person name="Murphy L.D."/>
            <person name="Oliver K."/>
            <person name="O'Neil S."/>
            <person name="Rabbinowitsch E."/>
            <person name="Rajandream M.A."/>
            <person name="Rutherford K.M."/>
            <person name="Rutter S."/>
            <person name="Seeger K."/>
            <person name="Saunders D."/>
            <person name="Sharp S."/>
            <person name="Squares R."/>
            <person name="Squares S."/>
            <person name="Taylor K."/>
            <person name="Warren T."/>
            <person name="Wietzorrek A."/>
            <person name="Woodward J.R."/>
            <person name="Barrell B.G."/>
            <person name="Parkhill J."/>
            <person name="Hopwood D.A."/>
        </authorList>
    </citation>
    <scope>NUCLEOTIDE SEQUENCE [LARGE SCALE GENOMIC DNA]</scope>
    <source>
        <strain>ATCC BAA-471 / A3(2) / M145</strain>
    </source>
</reference>
<gene>
    <name evidence="1" type="primary">rplC</name>
    <name type="ordered locus">SCO4702</name>
    <name type="ORF">SCD31.27</name>
</gene>
<protein>
    <recommendedName>
        <fullName evidence="1">Large ribosomal subunit protein uL3</fullName>
    </recommendedName>
    <alternativeName>
        <fullName evidence="2">50S ribosomal protein L3</fullName>
    </alternativeName>
</protein>
<dbReference type="EMBL" id="AL939121">
    <property type="protein sequence ID" value="CAB82070.1"/>
    <property type="molecule type" value="Genomic_DNA"/>
</dbReference>
<dbReference type="RefSeq" id="NP_628861.1">
    <property type="nucleotide sequence ID" value="NC_003888.3"/>
</dbReference>
<dbReference type="RefSeq" id="WP_003974267.1">
    <property type="nucleotide sequence ID" value="NZ_VNID01000016.1"/>
</dbReference>
<dbReference type="SMR" id="Q9L0E0"/>
<dbReference type="FunCoup" id="Q9L0E0">
    <property type="interactions" value="483"/>
</dbReference>
<dbReference type="STRING" id="100226.gene:17762351"/>
<dbReference type="PaxDb" id="100226-SCO4702"/>
<dbReference type="GeneID" id="91384336"/>
<dbReference type="KEGG" id="sco:SCO4702"/>
<dbReference type="PATRIC" id="fig|100226.15.peg.4773"/>
<dbReference type="eggNOG" id="COG0087">
    <property type="taxonomic scope" value="Bacteria"/>
</dbReference>
<dbReference type="HOGENOM" id="CLU_044142_4_1_11"/>
<dbReference type="InParanoid" id="Q9L0E0"/>
<dbReference type="OrthoDB" id="9806135at2"/>
<dbReference type="PhylomeDB" id="Q9L0E0"/>
<dbReference type="Proteomes" id="UP000001973">
    <property type="component" value="Chromosome"/>
</dbReference>
<dbReference type="GO" id="GO:0022625">
    <property type="term" value="C:cytosolic large ribosomal subunit"/>
    <property type="evidence" value="ECO:0000318"/>
    <property type="project" value="GO_Central"/>
</dbReference>
<dbReference type="GO" id="GO:0019843">
    <property type="term" value="F:rRNA binding"/>
    <property type="evidence" value="ECO:0007669"/>
    <property type="project" value="UniProtKB-UniRule"/>
</dbReference>
<dbReference type="GO" id="GO:0003735">
    <property type="term" value="F:structural constituent of ribosome"/>
    <property type="evidence" value="ECO:0000318"/>
    <property type="project" value="GO_Central"/>
</dbReference>
<dbReference type="GO" id="GO:0006412">
    <property type="term" value="P:translation"/>
    <property type="evidence" value="ECO:0007669"/>
    <property type="project" value="UniProtKB-UniRule"/>
</dbReference>
<dbReference type="FunFam" id="2.40.30.10:FF:000004">
    <property type="entry name" value="50S ribosomal protein L3"/>
    <property type="match status" value="1"/>
</dbReference>
<dbReference type="FunFam" id="3.30.160.810:FF:000003">
    <property type="entry name" value="50S ribosomal protein L3"/>
    <property type="match status" value="1"/>
</dbReference>
<dbReference type="Gene3D" id="3.30.160.810">
    <property type="match status" value="1"/>
</dbReference>
<dbReference type="Gene3D" id="2.40.30.10">
    <property type="entry name" value="Translation factors"/>
    <property type="match status" value="1"/>
</dbReference>
<dbReference type="HAMAP" id="MF_01325_B">
    <property type="entry name" value="Ribosomal_uL3_B"/>
    <property type="match status" value="1"/>
</dbReference>
<dbReference type="InterPro" id="IPR000597">
    <property type="entry name" value="Ribosomal_uL3"/>
</dbReference>
<dbReference type="InterPro" id="IPR019927">
    <property type="entry name" value="Ribosomal_uL3_bac/org-type"/>
</dbReference>
<dbReference type="InterPro" id="IPR019926">
    <property type="entry name" value="Ribosomal_uL3_CS"/>
</dbReference>
<dbReference type="InterPro" id="IPR009000">
    <property type="entry name" value="Transl_B-barrel_sf"/>
</dbReference>
<dbReference type="NCBIfam" id="TIGR03625">
    <property type="entry name" value="L3_bact"/>
    <property type="match status" value="1"/>
</dbReference>
<dbReference type="PANTHER" id="PTHR11229">
    <property type="entry name" value="50S RIBOSOMAL PROTEIN L3"/>
    <property type="match status" value="1"/>
</dbReference>
<dbReference type="PANTHER" id="PTHR11229:SF16">
    <property type="entry name" value="LARGE RIBOSOMAL SUBUNIT PROTEIN UL3C"/>
    <property type="match status" value="1"/>
</dbReference>
<dbReference type="Pfam" id="PF00297">
    <property type="entry name" value="Ribosomal_L3"/>
    <property type="match status" value="1"/>
</dbReference>
<dbReference type="SUPFAM" id="SSF50447">
    <property type="entry name" value="Translation proteins"/>
    <property type="match status" value="1"/>
</dbReference>
<dbReference type="PROSITE" id="PS00474">
    <property type="entry name" value="RIBOSOMAL_L3"/>
    <property type="match status" value="1"/>
</dbReference>
<feature type="chain" id="PRO_0000077166" description="Large ribosomal subunit protein uL3">
    <location>
        <begin position="1"/>
        <end position="214"/>
    </location>
</feature>
<sequence length="214" mass="22769">MTKQIKGILGEKLGMTQVWDENNRVVPVTVVKAGPNVVTQVRTNDVDGYESVQIAFGEIDPRKVNKPLKGHFAKADVTPRRHLVEIRTAAASEYTLGQEITAEAFESGVKVDVTAKSKGKGFAGVMKRHNFKGGKASHGAHRVHRMPGSIGGCATPGRVFKGMRMAGRMGNERVTTQNLTVHAVDAEKGLLLIKGAVPGPNGGLVLVRTAAKGA</sequence>
<evidence type="ECO:0000255" key="1">
    <source>
        <dbReference type="HAMAP-Rule" id="MF_01325"/>
    </source>
</evidence>
<evidence type="ECO:0000305" key="2"/>
<organism>
    <name type="scientific">Streptomyces coelicolor (strain ATCC BAA-471 / A3(2) / M145)</name>
    <dbReference type="NCBI Taxonomy" id="100226"/>
    <lineage>
        <taxon>Bacteria</taxon>
        <taxon>Bacillati</taxon>
        <taxon>Actinomycetota</taxon>
        <taxon>Actinomycetes</taxon>
        <taxon>Kitasatosporales</taxon>
        <taxon>Streptomycetaceae</taxon>
        <taxon>Streptomyces</taxon>
        <taxon>Streptomyces albidoflavus group</taxon>
    </lineage>
</organism>
<accession>Q9L0E0</accession>